<feature type="chain" id="PRO_1000165160" description="Anhydro-N-acetylmuramic acid kinase">
    <location>
        <begin position="1"/>
        <end position="382"/>
    </location>
</feature>
<feature type="binding site" evidence="1">
    <location>
        <begin position="22"/>
        <end position="29"/>
    </location>
    <ligand>
        <name>ATP</name>
        <dbReference type="ChEBI" id="CHEBI:30616"/>
    </ligand>
</feature>
<keyword id="KW-0067">ATP-binding</keyword>
<keyword id="KW-0119">Carbohydrate metabolism</keyword>
<keyword id="KW-0418">Kinase</keyword>
<keyword id="KW-0547">Nucleotide-binding</keyword>
<keyword id="KW-0808">Transferase</keyword>
<proteinExistence type="inferred from homology"/>
<protein>
    <recommendedName>
        <fullName evidence="1">Anhydro-N-acetylmuramic acid kinase</fullName>
        <ecNumber evidence="1">2.7.1.170</ecNumber>
    </recommendedName>
    <alternativeName>
        <fullName evidence="1">AnhMurNAc kinase</fullName>
    </alternativeName>
</protein>
<comment type="function">
    <text evidence="1">Catalyzes the specific phosphorylation of 1,6-anhydro-N-acetylmuramic acid (anhMurNAc) with the simultaneous cleavage of the 1,6-anhydro ring, generating MurNAc-6-P. Is required for the utilization of anhMurNAc either imported from the medium or derived from its own cell wall murein, and thus plays a role in cell wall recycling.</text>
</comment>
<comment type="catalytic activity">
    <reaction evidence="1">
        <text>1,6-anhydro-N-acetyl-beta-muramate + ATP + H2O = N-acetyl-D-muramate 6-phosphate + ADP + H(+)</text>
        <dbReference type="Rhea" id="RHEA:24952"/>
        <dbReference type="ChEBI" id="CHEBI:15377"/>
        <dbReference type="ChEBI" id="CHEBI:15378"/>
        <dbReference type="ChEBI" id="CHEBI:30616"/>
        <dbReference type="ChEBI" id="CHEBI:58690"/>
        <dbReference type="ChEBI" id="CHEBI:58722"/>
        <dbReference type="ChEBI" id="CHEBI:456216"/>
        <dbReference type="EC" id="2.7.1.170"/>
    </reaction>
</comment>
<comment type="pathway">
    <text evidence="1">Amino-sugar metabolism; 1,6-anhydro-N-acetylmuramate degradation.</text>
</comment>
<comment type="pathway">
    <text evidence="1">Cell wall biogenesis; peptidoglycan recycling.</text>
</comment>
<comment type="similarity">
    <text evidence="1">Belongs to the anhydro-N-acetylmuramic acid kinase family.</text>
</comment>
<dbReference type="EC" id="2.7.1.170" evidence="1"/>
<dbReference type="EMBL" id="CP000614">
    <property type="protein sequence ID" value="ABO53660.1"/>
    <property type="molecule type" value="Genomic_DNA"/>
</dbReference>
<dbReference type="SMR" id="A4JBK7"/>
<dbReference type="KEGG" id="bvi:Bcep1808_0648"/>
<dbReference type="eggNOG" id="COG2377">
    <property type="taxonomic scope" value="Bacteria"/>
</dbReference>
<dbReference type="HOGENOM" id="CLU_038782_0_0_4"/>
<dbReference type="UniPathway" id="UPA00343"/>
<dbReference type="UniPathway" id="UPA00544"/>
<dbReference type="Proteomes" id="UP000002287">
    <property type="component" value="Chromosome 1"/>
</dbReference>
<dbReference type="GO" id="GO:0005524">
    <property type="term" value="F:ATP binding"/>
    <property type="evidence" value="ECO:0007669"/>
    <property type="project" value="UniProtKB-UniRule"/>
</dbReference>
<dbReference type="GO" id="GO:0016301">
    <property type="term" value="F:kinase activity"/>
    <property type="evidence" value="ECO:0007669"/>
    <property type="project" value="UniProtKB-KW"/>
</dbReference>
<dbReference type="GO" id="GO:0016773">
    <property type="term" value="F:phosphotransferase activity, alcohol group as acceptor"/>
    <property type="evidence" value="ECO:0007669"/>
    <property type="project" value="UniProtKB-UniRule"/>
</dbReference>
<dbReference type="GO" id="GO:0097175">
    <property type="term" value="P:1,6-anhydro-N-acetyl-beta-muramic acid catabolic process"/>
    <property type="evidence" value="ECO:0007669"/>
    <property type="project" value="UniProtKB-UniRule"/>
</dbReference>
<dbReference type="GO" id="GO:0006040">
    <property type="term" value="P:amino sugar metabolic process"/>
    <property type="evidence" value="ECO:0007669"/>
    <property type="project" value="InterPro"/>
</dbReference>
<dbReference type="GO" id="GO:0009254">
    <property type="term" value="P:peptidoglycan turnover"/>
    <property type="evidence" value="ECO:0007669"/>
    <property type="project" value="UniProtKB-UniRule"/>
</dbReference>
<dbReference type="CDD" id="cd24050">
    <property type="entry name" value="ASKHA_NBD_ANMK"/>
    <property type="match status" value="1"/>
</dbReference>
<dbReference type="Gene3D" id="3.30.420.40">
    <property type="match status" value="2"/>
</dbReference>
<dbReference type="HAMAP" id="MF_01270">
    <property type="entry name" value="AnhMurNAc_kinase"/>
    <property type="match status" value="1"/>
</dbReference>
<dbReference type="InterPro" id="IPR005338">
    <property type="entry name" value="Anhydro_N_Ac-Mur_kinase"/>
</dbReference>
<dbReference type="InterPro" id="IPR043129">
    <property type="entry name" value="ATPase_NBD"/>
</dbReference>
<dbReference type="NCBIfam" id="NF007139">
    <property type="entry name" value="PRK09585.1-3"/>
    <property type="match status" value="1"/>
</dbReference>
<dbReference type="NCBIfam" id="NF007140">
    <property type="entry name" value="PRK09585.1-4"/>
    <property type="match status" value="1"/>
</dbReference>
<dbReference type="PANTHER" id="PTHR30605">
    <property type="entry name" value="ANHYDRO-N-ACETYLMURAMIC ACID KINASE"/>
    <property type="match status" value="1"/>
</dbReference>
<dbReference type="PANTHER" id="PTHR30605:SF0">
    <property type="entry name" value="ANHYDRO-N-ACETYLMURAMIC ACID KINASE"/>
    <property type="match status" value="1"/>
</dbReference>
<dbReference type="Pfam" id="PF03702">
    <property type="entry name" value="AnmK"/>
    <property type="match status" value="1"/>
</dbReference>
<dbReference type="SUPFAM" id="SSF53067">
    <property type="entry name" value="Actin-like ATPase domain"/>
    <property type="match status" value="1"/>
</dbReference>
<accession>A4JBK7</accession>
<sequence>MPQRHPQPAHPADGVYFGLMSGTSMDGVDGVAVRFETGRAPVVLAEAFVGFAQSLRDALFALQQPGDDEIDRESVAANALVARYAVCCHELQRTAGLSRDDVRAIGVHGQTVRHRPERGYTRQLNNPALLAELTHVDVIADFRMRDVAAGGHGAPLAPAFHATVFGAPGDTRVVCNLGGISNITILPAEGSDVRGFDCGPANALIDAWATRQLGKPYDDGGKFAARGTVHAALLDALLDEPYFTAPPPKSTGRDLFSAAWLDAKLAGFAQVAPEDVQATLTALTAVSVAREIARHAAGCKAVFVCGGGARNPVLLDALRRALQEAGVLATVDTTAALGVPPQQVEALAFAWLAYRFTARLPGNLASVTGAAGERVLGALYPR</sequence>
<reference key="1">
    <citation type="submission" date="2007-03" db="EMBL/GenBank/DDBJ databases">
        <title>Complete sequence of chromosome 1 of Burkholderia vietnamiensis G4.</title>
        <authorList>
            <consortium name="US DOE Joint Genome Institute"/>
            <person name="Copeland A."/>
            <person name="Lucas S."/>
            <person name="Lapidus A."/>
            <person name="Barry K."/>
            <person name="Detter J.C."/>
            <person name="Glavina del Rio T."/>
            <person name="Hammon N."/>
            <person name="Israni S."/>
            <person name="Dalin E."/>
            <person name="Tice H."/>
            <person name="Pitluck S."/>
            <person name="Chain P."/>
            <person name="Malfatti S."/>
            <person name="Shin M."/>
            <person name="Vergez L."/>
            <person name="Schmutz J."/>
            <person name="Larimer F."/>
            <person name="Land M."/>
            <person name="Hauser L."/>
            <person name="Kyrpides N."/>
            <person name="Tiedje J."/>
            <person name="Richardson P."/>
        </authorList>
    </citation>
    <scope>NUCLEOTIDE SEQUENCE [LARGE SCALE GENOMIC DNA]</scope>
    <source>
        <strain>G4 / LMG 22486</strain>
    </source>
</reference>
<name>ANMK_BURVG</name>
<gene>
    <name evidence="1" type="primary">anmK</name>
    <name type="ordered locus">Bcep1808_0648</name>
</gene>
<evidence type="ECO:0000255" key="1">
    <source>
        <dbReference type="HAMAP-Rule" id="MF_01270"/>
    </source>
</evidence>
<organism>
    <name type="scientific">Burkholderia vietnamiensis (strain G4 / LMG 22486)</name>
    <name type="common">Burkholderia cepacia (strain R1808)</name>
    <dbReference type="NCBI Taxonomy" id="269482"/>
    <lineage>
        <taxon>Bacteria</taxon>
        <taxon>Pseudomonadati</taxon>
        <taxon>Pseudomonadota</taxon>
        <taxon>Betaproteobacteria</taxon>
        <taxon>Burkholderiales</taxon>
        <taxon>Burkholderiaceae</taxon>
        <taxon>Burkholderia</taxon>
        <taxon>Burkholderia cepacia complex</taxon>
    </lineage>
</organism>